<sequence length="254" mass="28674">MNAMTAFSLNGAAPLANADELEAALRQIGTARYHNLHPFHRLLHGGKLNKGQVQAWALNRYYYQSSIPIKDAVVISRFRDRATRVEWRHRIEDHDGDLGSEGGIERWLKLTEGLGLDSGYVESTQGILPATRFAVDAYVHFVRDRTPLEAIASSLTELFAPNLHEERIAGMLAHYDFVNPEIMSYFKRRLEQAPRDTDFALRYVKQHATTPAEREAVCNALIFKTNVLWAQLDALHHAYVDGHIPPGAFVPQGF</sequence>
<keyword id="KW-0560">Oxidoreductase</keyword>
<keyword id="KW-0884">PQQ biosynthesis</keyword>
<name>PQQC_RHOPT</name>
<comment type="function">
    <text evidence="1">Ring cyclization and eight-electron oxidation of 3a-(2-amino-2-carboxyethyl)-4,5-dioxo-4,5,6,7,8,9-hexahydroquinoline-7,9-dicarboxylic-acid to PQQ.</text>
</comment>
<comment type="catalytic activity">
    <reaction evidence="1">
        <text>6-(2-amino-2-carboxyethyl)-7,8-dioxo-1,2,3,4,7,8-hexahydroquinoline-2,4-dicarboxylate + 3 O2 = pyrroloquinoline quinone + 2 H2O2 + 2 H2O + H(+)</text>
        <dbReference type="Rhea" id="RHEA:10692"/>
        <dbReference type="ChEBI" id="CHEBI:15377"/>
        <dbReference type="ChEBI" id="CHEBI:15378"/>
        <dbReference type="ChEBI" id="CHEBI:15379"/>
        <dbReference type="ChEBI" id="CHEBI:16240"/>
        <dbReference type="ChEBI" id="CHEBI:58442"/>
        <dbReference type="ChEBI" id="CHEBI:58778"/>
        <dbReference type="EC" id="1.3.3.11"/>
    </reaction>
</comment>
<comment type="pathway">
    <text evidence="1">Cofactor biosynthesis; pyrroloquinoline quinone biosynthesis.</text>
</comment>
<comment type="similarity">
    <text evidence="1">Belongs to the PqqC family.</text>
</comment>
<feature type="chain" id="PRO_1000131180" description="Pyrroloquinoline-quinone synthase">
    <location>
        <begin position="1"/>
        <end position="254"/>
    </location>
</feature>
<accession>B3QBT0</accession>
<reference key="1">
    <citation type="submission" date="2008-05" db="EMBL/GenBank/DDBJ databases">
        <title>Complete sequence of Rhodopseudomonas palustris TIE-1.</title>
        <authorList>
            <consortium name="US DOE Joint Genome Institute"/>
            <person name="Lucas S."/>
            <person name="Copeland A."/>
            <person name="Lapidus A."/>
            <person name="Glavina del Rio T."/>
            <person name="Dalin E."/>
            <person name="Tice H."/>
            <person name="Pitluck S."/>
            <person name="Chain P."/>
            <person name="Malfatti S."/>
            <person name="Shin M."/>
            <person name="Vergez L."/>
            <person name="Lang D."/>
            <person name="Schmutz J."/>
            <person name="Larimer F."/>
            <person name="Land M."/>
            <person name="Hauser L."/>
            <person name="Kyrpides N."/>
            <person name="Mikhailova N."/>
            <person name="Emerson D."/>
            <person name="Newman D.K."/>
            <person name="Roden E."/>
            <person name="Richardson P."/>
        </authorList>
    </citation>
    <scope>NUCLEOTIDE SEQUENCE [LARGE SCALE GENOMIC DNA]</scope>
    <source>
        <strain>TIE-1</strain>
    </source>
</reference>
<proteinExistence type="inferred from homology"/>
<protein>
    <recommendedName>
        <fullName evidence="1">Pyrroloquinoline-quinone synthase</fullName>
        <ecNumber evidence="1">1.3.3.11</ecNumber>
    </recommendedName>
    <alternativeName>
        <fullName evidence="1">Coenzyme PQQ synthesis protein C</fullName>
    </alternativeName>
    <alternativeName>
        <fullName evidence="1">Pyrroloquinoline quinone biosynthesis protein C</fullName>
    </alternativeName>
</protein>
<dbReference type="EC" id="1.3.3.11" evidence="1"/>
<dbReference type="EMBL" id="CP001096">
    <property type="protein sequence ID" value="ACF00680.1"/>
    <property type="molecule type" value="Genomic_DNA"/>
</dbReference>
<dbReference type="RefSeq" id="WP_012495481.1">
    <property type="nucleotide sequence ID" value="NC_011004.1"/>
</dbReference>
<dbReference type="SMR" id="B3QBT0"/>
<dbReference type="KEGG" id="rpt:Rpal_2159"/>
<dbReference type="HOGENOM" id="CLU_080136_0_0_5"/>
<dbReference type="UniPathway" id="UPA00539"/>
<dbReference type="Proteomes" id="UP000001725">
    <property type="component" value="Chromosome"/>
</dbReference>
<dbReference type="GO" id="GO:0033732">
    <property type="term" value="F:pyrroloquinoline-quinone synthase activity"/>
    <property type="evidence" value="ECO:0007669"/>
    <property type="project" value="UniProtKB-EC"/>
</dbReference>
<dbReference type="GO" id="GO:0018189">
    <property type="term" value="P:pyrroloquinoline quinone biosynthetic process"/>
    <property type="evidence" value="ECO:0007669"/>
    <property type="project" value="UniProtKB-UniRule"/>
</dbReference>
<dbReference type="GO" id="GO:0006790">
    <property type="term" value="P:sulfur compound metabolic process"/>
    <property type="evidence" value="ECO:0007669"/>
    <property type="project" value="UniProtKB-ARBA"/>
</dbReference>
<dbReference type="Gene3D" id="1.20.910.10">
    <property type="entry name" value="Heme oxygenase-like"/>
    <property type="match status" value="1"/>
</dbReference>
<dbReference type="HAMAP" id="MF_00654">
    <property type="entry name" value="PQQ_syn_PqqC"/>
    <property type="match status" value="1"/>
</dbReference>
<dbReference type="InterPro" id="IPR016084">
    <property type="entry name" value="Haem_Oase-like_multi-hlx"/>
</dbReference>
<dbReference type="InterPro" id="IPR011845">
    <property type="entry name" value="PqqC"/>
</dbReference>
<dbReference type="InterPro" id="IPR039068">
    <property type="entry name" value="PqqC-like"/>
</dbReference>
<dbReference type="InterPro" id="IPR004305">
    <property type="entry name" value="Thiaminase-2/PQQC"/>
</dbReference>
<dbReference type="NCBIfam" id="TIGR02111">
    <property type="entry name" value="PQQ_syn_pqqC"/>
    <property type="match status" value="1"/>
</dbReference>
<dbReference type="PANTHER" id="PTHR40279:SF3">
    <property type="entry name" value="4-AMINOBENZOATE SYNTHASE"/>
    <property type="match status" value="1"/>
</dbReference>
<dbReference type="PANTHER" id="PTHR40279">
    <property type="entry name" value="PQQC-LIKE PROTEIN"/>
    <property type="match status" value="1"/>
</dbReference>
<dbReference type="Pfam" id="PF03070">
    <property type="entry name" value="TENA_THI-4"/>
    <property type="match status" value="1"/>
</dbReference>
<dbReference type="SUPFAM" id="SSF48613">
    <property type="entry name" value="Heme oxygenase-like"/>
    <property type="match status" value="1"/>
</dbReference>
<evidence type="ECO:0000255" key="1">
    <source>
        <dbReference type="HAMAP-Rule" id="MF_00654"/>
    </source>
</evidence>
<gene>
    <name evidence="1" type="primary">pqqC</name>
    <name type="ordered locus">Rpal_2159</name>
</gene>
<organism>
    <name type="scientific">Rhodopseudomonas palustris (strain TIE-1)</name>
    <dbReference type="NCBI Taxonomy" id="395960"/>
    <lineage>
        <taxon>Bacteria</taxon>
        <taxon>Pseudomonadati</taxon>
        <taxon>Pseudomonadota</taxon>
        <taxon>Alphaproteobacteria</taxon>
        <taxon>Hyphomicrobiales</taxon>
        <taxon>Nitrobacteraceae</taxon>
        <taxon>Rhodopseudomonas</taxon>
    </lineage>
</organism>